<accession>B7MGV7</accession>
<protein>
    <recommendedName>
        <fullName evidence="1">Fatty acid oxidation complex subunit alpha</fullName>
    </recommendedName>
    <domain>
        <recommendedName>
            <fullName evidence="1">Enoyl-CoA hydratase/3-hydroxybutyryl-CoA epimerase</fullName>
            <ecNumber evidence="1">4.2.1.17</ecNumber>
            <ecNumber evidence="1">5.1.2.3</ecNumber>
        </recommendedName>
    </domain>
    <domain>
        <recommendedName>
            <fullName evidence="1">3-hydroxyacyl-CoA dehydrogenase</fullName>
            <ecNumber evidence="1">1.1.1.35</ecNumber>
        </recommendedName>
    </domain>
</protein>
<dbReference type="EC" id="4.2.1.17" evidence="1"/>
<dbReference type="EC" id="5.1.2.3" evidence="1"/>
<dbReference type="EC" id="1.1.1.35" evidence="1"/>
<dbReference type="EMBL" id="CU928161">
    <property type="protein sequence ID" value="CAR03766.1"/>
    <property type="molecule type" value="Genomic_DNA"/>
</dbReference>
<dbReference type="RefSeq" id="WP_000425007.1">
    <property type="nucleotide sequence ID" value="NC_011742.1"/>
</dbReference>
<dbReference type="SMR" id="B7MGV7"/>
<dbReference type="KEGG" id="ecz:ECS88_2488"/>
<dbReference type="HOGENOM" id="CLU_009834_16_1_6"/>
<dbReference type="UniPathway" id="UPA00659"/>
<dbReference type="Proteomes" id="UP000000747">
    <property type="component" value="Chromosome"/>
</dbReference>
<dbReference type="GO" id="GO:0005737">
    <property type="term" value="C:cytoplasm"/>
    <property type="evidence" value="ECO:0007669"/>
    <property type="project" value="UniProtKB-SubCell"/>
</dbReference>
<dbReference type="GO" id="GO:0008692">
    <property type="term" value="F:3-hydroxybutyryl-CoA epimerase activity"/>
    <property type="evidence" value="ECO:0007669"/>
    <property type="project" value="UniProtKB-UniRule"/>
</dbReference>
<dbReference type="GO" id="GO:0004300">
    <property type="term" value="F:enoyl-CoA hydratase activity"/>
    <property type="evidence" value="ECO:0007669"/>
    <property type="project" value="UniProtKB-UniRule"/>
</dbReference>
<dbReference type="GO" id="GO:0016509">
    <property type="term" value="F:long-chain-3-hydroxyacyl-CoA dehydrogenase activity"/>
    <property type="evidence" value="ECO:0007669"/>
    <property type="project" value="TreeGrafter"/>
</dbReference>
<dbReference type="GO" id="GO:0070403">
    <property type="term" value="F:NAD+ binding"/>
    <property type="evidence" value="ECO:0007669"/>
    <property type="project" value="InterPro"/>
</dbReference>
<dbReference type="GO" id="GO:0006635">
    <property type="term" value="P:fatty acid beta-oxidation"/>
    <property type="evidence" value="ECO:0007669"/>
    <property type="project" value="UniProtKB-UniRule"/>
</dbReference>
<dbReference type="CDD" id="cd06558">
    <property type="entry name" value="crotonase-like"/>
    <property type="match status" value="1"/>
</dbReference>
<dbReference type="FunFam" id="1.10.1040.50:FF:000003">
    <property type="entry name" value="Fatty acid oxidation complex subunit alpha"/>
    <property type="match status" value="1"/>
</dbReference>
<dbReference type="FunFam" id="3.90.226.10:FF:000011">
    <property type="entry name" value="Fatty acid oxidation complex subunit alpha"/>
    <property type="match status" value="1"/>
</dbReference>
<dbReference type="FunFam" id="3.40.50.720:FF:000009">
    <property type="entry name" value="Fatty oxidation complex, alpha subunit"/>
    <property type="match status" value="1"/>
</dbReference>
<dbReference type="Gene3D" id="1.10.1040.50">
    <property type="match status" value="1"/>
</dbReference>
<dbReference type="Gene3D" id="3.90.226.10">
    <property type="entry name" value="2-enoyl-CoA Hydratase, Chain A, domain 1"/>
    <property type="match status" value="1"/>
</dbReference>
<dbReference type="Gene3D" id="3.40.50.720">
    <property type="entry name" value="NAD(P)-binding Rossmann-like Domain"/>
    <property type="match status" value="1"/>
</dbReference>
<dbReference type="HAMAP" id="MF_01617">
    <property type="entry name" value="FadJ"/>
    <property type="match status" value="1"/>
</dbReference>
<dbReference type="InterPro" id="IPR006180">
    <property type="entry name" value="3-OHacyl-CoA_DH_CS"/>
</dbReference>
<dbReference type="InterPro" id="IPR006176">
    <property type="entry name" value="3-OHacyl-CoA_DH_NAD-bd"/>
</dbReference>
<dbReference type="InterPro" id="IPR006108">
    <property type="entry name" value="3HC_DH_C"/>
</dbReference>
<dbReference type="InterPro" id="IPR008927">
    <property type="entry name" value="6-PGluconate_DH-like_C_sf"/>
</dbReference>
<dbReference type="InterPro" id="IPR029045">
    <property type="entry name" value="ClpP/crotonase-like_dom_sf"/>
</dbReference>
<dbReference type="InterPro" id="IPR001753">
    <property type="entry name" value="Enoyl-CoA_hydra/iso"/>
</dbReference>
<dbReference type="InterPro" id="IPR050136">
    <property type="entry name" value="FA_oxidation_alpha_subunit"/>
</dbReference>
<dbReference type="InterPro" id="IPR012802">
    <property type="entry name" value="FadJ"/>
</dbReference>
<dbReference type="InterPro" id="IPR036291">
    <property type="entry name" value="NAD(P)-bd_dom_sf"/>
</dbReference>
<dbReference type="NCBIfam" id="TIGR02440">
    <property type="entry name" value="FadJ"/>
    <property type="match status" value="1"/>
</dbReference>
<dbReference type="NCBIfam" id="NF008363">
    <property type="entry name" value="PRK11154.1"/>
    <property type="match status" value="1"/>
</dbReference>
<dbReference type="PANTHER" id="PTHR43612">
    <property type="entry name" value="TRIFUNCTIONAL ENZYME SUBUNIT ALPHA"/>
    <property type="match status" value="1"/>
</dbReference>
<dbReference type="PANTHER" id="PTHR43612:SF3">
    <property type="entry name" value="TRIFUNCTIONAL ENZYME SUBUNIT ALPHA, MITOCHONDRIAL"/>
    <property type="match status" value="1"/>
</dbReference>
<dbReference type="Pfam" id="PF00725">
    <property type="entry name" value="3HCDH"/>
    <property type="match status" value="2"/>
</dbReference>
<dbReference type="Pfam" id="PF02737">
    <property type="entry name" value="3HCDH_N"/>
    <property type="match status" value="1"/>
</dbReference>
<dbReference type="Pfam" id="PF00378">
    <property type="entry name" value="ECH_1"/>
    <property type="match status" value="1"/>
</dbReference>
<dbReference type="SUPFAM" id="SSF48179">
    <property type="entry name" value="6-phosphogluconate dehydrogenase C-terminal domain-like"/>
    <property type="match status" value="2"/>
</dbReference>
<dbReference type="SUPFAM" id="SSF52096">
    <property type="entry name" value="ClpP/crotonase"/>
    <property type="match status" value="1"/>
</dbReference>
<dbReference type="SUPFAM" id="SSF51735">
    <property type="entry name" value="NAD(P)-binding Rossmann-fold domains"/>
    <property type="match status" value="1"/>
</dbReference>
<dbReference type="PROSITE" id="PS00067">
    <property type="entry name" value="3HCDH"/>
    <property type="match status" value="1"/>
</dbReference>
<evidence type="ECO:0000255" key="1">
    <source>
        <dbReference type="HAMAP-Rule" id="MF_01617"/>
    </source>
</evidence>
<name>FADJ_ECO45</name>
<keyword id="KW-0963">Cytoplasm</keyword>
<keyword id="KW-0276">Fatty acid metabolism</keyword>
<keyword id="KW-0413">Isomerase</keyword>
<keyword id="KW-0442">Lipid degradation</keyword>
<keyword id="KW-0443">Lipid metabolism</keyword>
<keyword id="KW-0456">Lyase</keyword>
<keyword id="KW-0511">Multifunctional enzyme</keyword>
<keyword id="KW-0520">NAD</keyword>
<keyword id="KW-0560">Oxidoreductase</keyword>
<keyword id="KW-1185">Reference proteome</keyword>
<reference key="1">
    <citation type="journal article" date="2009" name="PLoS Genet.">
        <title>Organised genome dynamics in the Escherichia coli species results in highly diverse adaptive paths.</title>
        <authorList>
            <person name="Touchon M."/>
            <person name="Hoede C."/>
            <person name="Tenaillon O."/>
            <person name="Barbe V."/>
            <person name="Baeriswyl S."/>
            <person name="Bidet P."/>
            <person name="Bingen E."/>
            <person name="Bonacorsi S."/>
            <person name="Bouchier C."/>
            <person name="Bouvet O."/>
            <person name="Calteau A."/>
            <person name="Chiapello H."/>
            <person name="Clermont O."/>
            <person name="Cruveiller S."/>
            <person name="Danchin A."/>
            <person name="Diard M."/>
            <person name="Dossat C."/>
            <person name="Karoui M.E."/>
            <person name="Frapy E."/>
            <person name="Garry L."/>
            <person name="Ghigo J.M."/>
            <person name="Gilles A.M."/>
            <person name="Johnson J."/>
            <person name="Le Bouguenec C."/>
            <person name="Lescat M."/>
            <person name="Mangenot S."/>
            <person name="Martinez-Jehanne V."/>
            <person name="Matic I."/>
            <person name="Nassif X."/>
            <person name="Oztas S."/>
            <person name="Petit M.A."/>
            <person name="Pichon C."/>
            <person name="Rouy Z."/>
            <person name="Ruf C.S."/>
            <person name="Schneider D."/>
            <person name="Tourret J."/>
            <person name="Vacherie B."/>
            <person name="Vallenet D."/>
            <person name="Medigue C."/>
            <person name="Rocha E.P.C."/>
            <person name="Denamur E."/>
        </authorList>
    </citation>
    <scope>NUCLEOTIDE SEQUENCE [LARGE SCALE GENOMIC DNA]</scope>
    <source>
        <strain>S88 / ExPEC</strain>
    </source>
</reference>
<gene>
    <name evidence="1" type="primary">fadJ</name>
    <name type="ordered locus">ECS88_2488</name>
</gene>
<organism>
    <name type="scientific">Escherichia coli O45:K1 (strain S88 / ExPEC)</name>
    <dbReference type="NCBI Taxonomy" id="585035"/>
    <lineage>
        <taxon>Bacteria</taxon>
        <taxon>Pseudomonadati</taxon>
        <taxon>Pseudomonadota</taxon>
        <taxon>Gammaproteobacteria</taxon>
        <taxon>Enterobacterales</taxon>
        <taxon>Enterobacteriaceae</taxon>
        <taxon>Escherichia</taxon>
    </lineage>
</organism>
<sequence length="714" mass="77095">MEMASAFTLNVRLDNIAIITIDVPGEKMNTLKAEFASQVRAIIKQIRENKELRGVVFVSAKPDNFIAGADINMIGNCKTAQEAEVLARQGQQLMAEIHALPIPVIAAIHGACLGGGLELALACHGRVCTDDPKTVLGLPEVQLGLLPGSGGTQRLPRLIGVSTALEMILTGKQLRAKQAVKLGLVDDVVPHSILLEAAVELAKQDRPSSRPLPVRERILAGPLGRALLFKMVGKKTEHKTQGNYPATERILEVVETGLAQGTSSGYDAEARAFGELAMTPQSQALRNIFFASTDVKKDPGSDAPPAPLNSVGILGGGLMGGGIAYVTACKAGLPVRIKDINPRGINHALKYSWDQLEGKVRRRHLKASERDKQLALISGTTDYCGFAHRDLIIEAVFENLELKQQMVAEVEQNCATHTIFASNTSSLPIGDIAAHAARPEQVIGLHFFSPVEKMPLVEIIPHASTSAQTIATTVKLAKKQGKTPIVVRDKAGFYVNRILAPYINEAIRMLTEGERIEHIDAALVKFGFPVGPIQLLDEVGIDTGTKIMPVLEAAYGERFSAPANVVSSILNDDRKGRKNGRGFYLYGQKGCKSKKQVDPAIYPLIGAQGQGRLSAPQVAERCVMLMLNEAVRCLDEQVIRSVRDGDIGAVFGIGFPPFLGGPFRYIDSLGAGEVVAIMQRLATQYGSRFTPCDRLVEMSERGESFWKTTATDLQ</sequence>
<feature type="chain" id="PRO_1000185935" description="Fatty acid oxidation complex subunit alpha">
    <location>
        <begin position="1"/>
        <end position="714"/>
    </location>
</feature>
<feature type="region of interest" description="Enoyl-CoA hydratase" evidence="1">
    <location>
        <begin position="1"/>
        <end position="190"/>
    </location>
</feature>
<feature type="region of interest" description="3-hydroxyacyl-CoA dehydrogenase" evidence="1">
    <location>
        <begin position="306"/>
        <end position="714"/>
    </location>
</feature>
<feature type="site" description="Important for catalytic activity" evidence="1">
    <location>
        <position position="118"/>
    </location>
</feature>
<feature type="site" description="Important for catalytic activity" evidence="1">
    <location>
        <position position="140"/>
    </location>
</feature>
<comment type="function">
    <text evidence="1">Catalyzes the formation of a hydroxyacyl-CoA by addition of water on enoyl-CoA. Also exhibits 3-hydroxyacyl-CoA epimerase and 3-hydroxyacyl-CoA dehydrogenase activities.</text>
</comment>
<comment type="catalytic activity">
    <reaction evidence="1">
        <text>a (3S)-3-hydroxyacyl-CoA = a (2E)-enoyl-CoA + H2O</text>
        <dbReference type="Rhea" id="RHEA:16105"/>
        <dbReference type="ChEBI" id="CHEBI:15377"/>
        <dbReference type="ChEBI" id="CHEBI:57318"/>
        <dbReference type="ChEBI" id="CHEBI:58856"/>
        <dbReference type="EC" id="4.2.1.17"/>
    </reaction>
</comment>
<comment type="catalytic activity">
    <reaction evidence="1">
        <text>a 4-saturated-(3S)-3-hydroxyacyl-CoA = a (3E)-enoyl-CoA + H2O</text>
        <dbReference type="Rhea" id="RHEA:20724"/>
        <dbReference type="ChEBI" id="CHEBI:15377"/>
        <dbReference type="ChEBI" id="CHEBI:58521"/>
        <dbReference type="ChEBI" id="CHEBI:137480"/>
        <dbReference type="EC" id="4.2.1.17"/>
    </reaction>
</comment>
<comment type="catalytic activity">
    <reaction evidence="1">
        <text>a (3S)-3-hydroxyacyl-CoA + NAD(+) = a 3-oxoacyl-CoA + NADH + H(+)</text>
        <dbReference type="Rhea" id="RHEA:22432"/>
        <dbReference type="ChEBI" id="CHEBI:15378"/>
        <dbReference type="ChEBI" id="CHEBI:57318"/>
        <dbReference type="ChEBI" id="CHEBI:57540"/>
        <dbReference type="ChEBI" id="CHEBI:57945"/>
        <dbReference type="ChEBI" id="CHEBI:90726"/>
        <dbReference type="EC" id="1.1.1.35"/>
    </reaction>
</comment>
<comment type="catalytic activity">
    <reaction evidence="1">
        <text>(3S)-3-hydroxybutanoyl-CoA = (3R)-3-hydroxybutanoyl-CoA</text>
        <dbReference type="Rhea" id="RHEA:21760"/>
        <dbReference type="ChEBI" id="CHEBI:57315"/>
        <dbReference type="ChEBI" id="CHEBI:57316"/>
        <dbReference type="EC" id="5.1.2.3"/>
    </reaction>
</comment>
<comment type="pathway">
    <text evidence="1">Lipid metabolism; fatty acid beta-oxidation.</text>
</comment>
<comment type="subunit">
    <text evidence="1">Heterotetramer of two alpha chains (FadJ) and two beta chains (FadI).</text>
</comment>
<comment type="subcellular location">
    <subcellularLocation>
        <location evidence="1">Cytoplasm</location>
    </subcellularLocation>
</comment>
<comment type="similarity">
    <text evidence="1">In the N-terminal section; belongs to the enoyl-CoA hydratase/isomerase family.</text>
</comment>
<comment type="similarity">
    <text evidence="1">In the central section; belongs to the 3-hydroxyacyl-CoA dehydrogenase family.</text>
</comment>
<proteinExistence type="inferred from homology"/>